<organism evidence="3">
    <name type="scientific">Centruroides baergi</name>
    <name type="common">Scorpion</name>
    <name type="synonym">Centruroides nigrovariatus baergi</name>
    <dbReference type="NCBI Taxonomy" id="329350"/>
    <lineage>
        <taxon>Eukaryota</taxon>
        <taxon>Metazoa</taxon>
        <taxon>Ecdysozoa</taxon>
        <taxon>Arthropoda</taxon>
        <taxon>Chelicerata</taxon>
        <taxon>Arachnida</taxon>
        <taxon>Scorpiones</taxon>
        <taxon>Buthida</taxon>
        <taxon>Buthoidea</taxon>
        <taxon>Buthidae</taxon>
        <taxon>Centruroides</taxon>
    </lineage>
</organism>
<name>SCX1_CENBA</name>
<keyword id="KW-0108">Calcium channel impairing toxin</keyword>
<keyword id="KW-0903">Direct protein sequencing</keyword>
<keyword id="KW-1015">Disulfide bond</keyword>
<keyword id="KW-0872">Ion channel impairing toxin</keyword>
<keyword id="KW-0528">Neurotoxin</keyword>
<keyword id="KW-0964">Secreted</keyword>
<keyword id="KW-0800">Toxin</keyword>
<keyword id="KW-1218">Voltage-gated calcium channel impairing toxin</keyword>
<comment type="function">
    <text evidence="2">Beta toxins bind voltage-independently at site-4 of sodium channels (Nav) and reduces peak current and shifts the voltage of activation toward more negative potentials thereby affecting sodium channel activation and promoting spontaneous and repetitive firing (PubMed:32479835). Has an inhibitory effect on voltage-gated sodium channel hNav1.6/SCN8A, affecting both the activation and inactivation processes (PubMed:32479835). This toxin is active against mammals and lethal to mice (PubMed:32479835).</text>
</comment>
<comment type="activity regulation">
    <text evidence="2">Inhibited by human antibodies scFvs 10FG2 and LR.</text>
</comment>
<comment type="subcellular location">
    <subcellularLocation>
        <location evidence="2">Secreted</location>
    </subcellularLocation>
</comment>
<comment type="tissue specificity">
    <text evidence="5">Expressed by the venom gland.</text>
</comment>
<comment type="domain">
    <text evidence="4">Has the structural arrangement of an alpha-helix connected to antiparallel beta-sheets by disulfide bonds (CS-alpha/beta).</text>
</comment>
<comment type="mass spectrometry" mass="7522.7" error="1.0" method="Electrospray" evidence="2"/>
<comment type="toxic dose">
    <text evidence="2">LD(50) is 2.0 ug/mouse by intraperitoneal injection into mice.</text>
</comment>
<comment type="similarity">
    <text evidence="4">Belongs to the long (4 C-C) scorpion toxin superfamily. Sodium channel inhibitor family. Beta subfamily.</text>
</comment>
<evidence type="ECO:0000255" key="1">
    <source>
        <dbReference type="PROSITE-ProRule" id="PRU01210"/>
    </source>
</evidence>
<evidence type="ECO:0000269" key="2">
    <source>
    </source>
</evidence>
<evidence type="ECO:0000303" key="3">
    <source>
    </source>
</evidence>
<evidence type="ECO:0000305" key="4"/>
<evidence type="ECO:0000305" key="5">
    <source>
    </source>
</evidence>
<protein>
    <recommendedName>
        <fullName evidence="3">Beta-toxin Cb1</fullName>
    </recommendedName>
</protein>
<reference evidence="4" key="1">
    <citation type="journal article" date="2020" name="Toxicon">
        <title>Biochemical, electrophysiological and immunological characterization of the venom from Centruroides baergi, a new scorpion species of medical importance in Mexico.</title>
        <authorList>
            <person name="Gomez-Ramirez I.V."/>
            <person name="Riano-Umbarila L."/>
            <person name="Olamendi-Portugal T."/>
            <person name="Restano-Cassulini R."/>
            <person name="Possani L.D."/>
            <person name="Becerril B."/>
        </authorList>
    </citation>
    <scope>PROTEIN SEQUENCE</scope>
    <scope>FUNCTION</scope>
    <scope>ACTIVITY REGULATION</scope>
    <scope>SUBCELLULAR LOCATION</scope>
    <scope>MASS SPECTROMETRY</scope>
    <scope>TOXIC DOSE</scope>
    <source>
        <tissue evidence="3">Venom</tissue>
    </source>
</reference>
<feature type="chain" id="PRO_0000450847" description="Beta-toxin Cb1">
    <location>
        <begin position="1"/>
        <end position="66"/>
    </location>
</feature>
<feature type="domain" description="LCN-type CS-alpha/beta" evidence="1">
    <location>
        <begin position="1"/>
        <end position="66"/>
    </location>
</feature>
<feature type="disulfide bond" evidence="1">
    <location>
        <begin position="12"/>
        <end position="65"/>
    </location>
</feature>
<feature type="disulfide bond" evidence="1">
    <location>
        <begin position="16"/>
        <end position="41"/>
    </location>
</feature>
<feature type="disulfide bond" evidence="1">
    <location>
        <begin position="25"/>
        <end position="46"/>
    </location>
</feature>
<feature type="disulfide bond" evidence="1">
    <location>
        <begin position="29"/>
        <end position="48"/>
    </location>
</feature>
<dbReference type="SMR" id="C0HLR3"/>
<dbReference type="GO" id="GO:0005615">
    <property type="term" value="C:extracellular space"/>
    <property type="evidence" value="ECO:0000314"/>
    <property type="project" value="UniProtKB"/>
</dbReference>
<dbReference type="GO" id="GO:0005246">
    <property type="term" value="F:calcium channel regulator activity"/>
    <property type="evidence" value="ECO:0007669"/>
    <property type="project" value="UniProtKB-KW"/>
</dbReference>
<dbReference type="GO" id="GO:0019871">
    <property type="term" value="F:sodium channel inhibitor activity"/>
    <property type="evidence" value="ECO:0000314"/>
    <property type="project" value="UniProtKB"/>
</dbReference>
<dbReference type="GO" id="GO:0090729">
    <property type="term" value="F:toxin activity"/>
    <property type="evidence" value="ECO:0000314"/>
    <property type="project" value="UniProtKB"/>
</dbReference>
<dbReference type="GO" id="GO:0006952">
    <property type="term" value="P:defense response"/>
    <property type="evidence" value="ECO:0000314"/>
    <property type="project" value="UniProtKB"/>
</dbReference>
<dbReference type="GO" id="GO:0044493">
    <property type="term" value="P:envenomation resulting in negative regulation of voltage-gated sodium channel activity in another organism"/>
    <property type="evidence" value="ECO:0000314"/>
    <property type="project" value="UniProtKB"/>
</dbReference>
<dbReference type="CDD" id="cd23106">
    <property type="entry name" value="neurotoxins_LC_scorpion"/>
    <property type="match status" value="1"/>
</dbReference>
<dbReference type="FunFam" id="3.30.30.10:FF:000002">
    <property type="entry name" value="Alpha-like toxin BmK-M1"/>
    <property type="match status" value="1"/>
</dbReference>
<dbReference type="Gene3D" id="3.30.30.10">
    <property type="entry name" value="Knottin, scorpion toxin-like"/>
    <property type="match status" value="1"/>
</dbReference>
<dbReference type="InterPro" id="IPR044062">
    <property type="entry name" value="LCN-type_CS_alpha_beta_dom"/>
</dbReference>
<dbReference type="InterPro" id="IPR003614">
    <property type="entry name" value="Scorpion_toxin-like"/>
</dbReference>
<dbReference type="InterPro" id="IPR036574">
    <property type="entry name" value="Scorpion_toxin-like_sf"/>
</dbReference>
<dbReference type="InterPro" id="IPR018218">
    <property type="entry name" value="Scorpion_toxinL"/>
</dbReference>
<dbReference type="PRINTS" id="PR00285">
    <property type="entry name" value="SCORPNTOXIN"/>
</dbReference>
<dbReference type="SMART" id="SM00505">
    <property type="entry name" value="Knot1"/>
    <property type="match status" value="1"/>
</dbReference>
<dbReference type="SUPFAM" id="SSF57095">
    <property type="entry name" value="Scorpion toxin-like"/>
    <property type="match status" value="1"/>
</dbReference>
<dbReference type="PROSITE" id="PS51863">
    <property type="entry name" value="LCN_CSAB"/>
    <property type="match status" value="1"/>
</dbReference>
<proteinExistence type="evidence at protein level"/>
<accession>C0HLR3</accession>
<sequence length="66" mass="7530">KEGYIVNHSTGCKYECYKLGDNDYCLRECKAQYGKGAGGYCYAFGCWCTHLYEQAVVWPLPKKTCN</sequence>